<name>RK36_TOBAC</name>
<feature type="chain" id="PRO_0000126348" description="Large ribosomal subunit protein bL36c">
    <location>
        <begin position="1"/>
        <end position="37"/>
    </location>
</feature>
<sequence length="37" mass="4460">MKIRASVRKICEKCRLIRRRGRIIVICSNPRHKQRQG</sequence>
<comment type="subcellular location">
    <subcellularLocation>
        <location>Plastid</location>
        <location>Chloroplast</location>
    </subcellularLocation>
</comment>
<comment type="similarity">
    <text evidence="1">Belongs to the bacterial ribosomal protein bL36 family.</text>
</comment>
<reference key="1">
    <citation type="journal article" date="1986" name="EMBO J.">
        <title>The complete nucleotide sequence of the tobacco chloroplast genome: its gene organization and expression.</title>
        <authorList>
            <person name="Shinozaki K."/>
            <person name="Ohme M."/>
            <person name="Tanaka M."/>
            <person name="Wakasugi T."/>
            <person name="Hayashida N."/>
            <person name="Matsubayashi T."/>
            <person name="Zaita N."/>
            <person name="Chunwongse J."/>
            <person name="Obokata J."/>
            <person name="Yamaguchi-Shinozaki K."/>
            <person name="Ohto C."/>
            <person name="Torazawa K."/>
            <person name="Meng B.-Y."/>
            <person name="Sugita M."/>
            <person name="Deno H."/>
            <person name="Kamogashira T."/>
            <person name="Yamada K."/>
            <person name="Kusuda J."/>
            <person name="Takaiwa F."/>
            <person name="Kato A."/>
            <person name="Tohdoh N."/>
            <person name="Shimada H."/>
            <person name="Sugiura M."/>
        </authorList>
    </citation>
    <scope>NUCLEOTIDE SEQUENCE [LARGE SCALE GENOMIC DNA]</scope>
    <source>
        <strain>cv. Bright Yellow 4</strain>
    </source>
</reference>
<geneLocation type="chloroplast"/>
<organism>
    <name type="scientific">Nicotiana tabacum</name>
    <name type="common">Common tobacco</name>
    <dbReference type="NCBI Taxonomy" id="4097"/>
    <lineage>
        <taxon>Eukaryota</taxon>
        <taxon>Viridiplantae</taxon>
        <taxon>Streptophyta</taxon>
        <taxon>Embryophyta</taxon>
        <taxon>Tracheophyta</taxon>
        <taxon>Spermatophyta</taxon>
        <taxon>Magnoliopsida</taxon>
        <taxon>eudicotyledons</taxon>
        <taxon>Gunneridae</taxon>
        <taxon>Pentapetalae</taxon>
        <taxon>asterids</taxon>
        <taxon>lamiids</taxon>
        <taxon>Solanales</taxon>
        <taxon>Solanaceae</taxon>
        <taxon>Nicotianoideae</taxon>
        <taxon>Nicotianeae</taxon>
        <taxon>Nicotiana</taxon>
    </lineage>
</organism>
<keyword id="KW-0150">Chloroplast</keyword>
<keyword id="KW-0934">Plastid</keyword>
<keyword id="KW-1185">Reference proteome</keyword>
<keyword id="KW-0687">Ribonucleoprotein</keyword>
<keyword id="KW-0689">Ribosomal protein</keyword>
<proteinExistence type="inferred from homology"/>
<dbReference type="EMBL" id="Z00044">
    <property type="protein sequence ID" value="CAJ32482.1"/>
    <property type="molecule type" value="Genomic_DNA"/>
</dbReference>
<dbReference type="PIR" id="A05203">
    <property type="entry name" value="R5NT36"/>
</dbReference>
<dbReference type="RefSeq" id="YP_002720023.1">
    <property type="nucleotide sequence ID" value="NC_001879.2"/>
</dbReference>
<dbReference type="SMR" id="P62118"/>
<dbReference type="GeneID" id="7564684"/>
<dbReference type="KEGG" id="nta:7564684"/>
<dbReference type="Proteomes" id="UP000084051">
    <property type="component" value="Unplaced"/>
</dbReference>
<dbReference type="GO" id="GO:0009507">
    <property type="term" value="C:chloroplast"/>
    <property type="evidence" value="ECO:0007669"/>
    <property type="project" value="UniProtKB-SubCell"/>
</dbReference>
<dbReference type="GO" id="GO:1990904">
    <property type="term" value="C:ribonucleoprotein complex"/>
    <property type="evidence" value="ECO:0007669"/>
    <property type="project" value="UniProtKB-KW"/>
</dbReference>
<dbReference type="GO" id="GO:0005840">
    <property type="term" value="C:ribosome"/>
    <property type="evidence" value="ECO:0007669"/>
    <property type="project" value="UniProtKB-KW"/>
</dbReference>
<dbReference type="GO" id="GO:0003735">
    <property type="term" value="F:structural constituent of ribosome"/>
    <property type="evidence" value="ECO:0007669"/>
    <property type="project" value="InterPro"/>
</dbReference>
<dbReference type="GO" id="GO:0006412">
    <property type="term" value="P:translation"/>
    <property type="evidence" value="ECO:0007669"/>
    <property type="project" value="UniProtKB-UniRule"/>
</dbReference>
<dbReference type="HAMAP" id="MF_00251">
    <property type="entry name" value="Ribosomal_bL36"/>
    <property type="match status" value="1"/>
</dbReference>
<dbReference type="InterPro" id="IPR000473">
    <property type="entry name" value="Ribosomal_bL36"/>
</dbReference>
<dbReference type="InterPro" id="IPR035977">
    <property type="entry name" value="Ribosomal_bL36_sp"/>
</dbReference>
<dbReference type="NCBIfam" id="TIGR01022">
    <property type="entry name" value="rpmJ_bact"/>
    <property type="match status" value="1"/>
</dbReference>
<dbReference type="PANTHER" id="PTHR42888">
    <property type="entry name" value="50S RIBOSOMAL PROTEIN L36, CHLOROPLASTIC"/>
    <property type="match status" value="1"/>
</dbReference>
<dbReference type="PANTHER" id="PTHR42888:SF1">
    <property type="entry name" value="LARGE RIBOSOMAL SUBUNIT PROTEIN BL36C"/>
    <property type="match status" value="1"/>
</dbReference>
<dbReference type="Pfam" id="PF00444">
    <property type="entry name" value="Ribosomal_L36"/>
    <property type="match status" value="1"/>
</dbReference>
<dbReference type="SUPFAM" id="SSF57840">
    <property type="entry name" value="Ribosomal protein L36"/>
    <property type="match status" value="1"/>
</dbReference>
<dbReference type="PROSITE" id="PS00828">
    <property type="entry name" value="RIBOSOMAL_L36"/>
    <property type="match status" value="1"/>
</dbReference>
<protein>
    <recommendedName>
        <fullName evidence="1">Large ribosomal subunit protein bL36c</fullName>
    </recommendedName>
    <alternativeName>
        <fullName>50S ribosomal protein L36, chloroplastic</fullName>
    </alternativeName>
</protein>
<evidence type="ECO:0000305" key="1"/>
<accession>P62118</accession>
<accession>P12144</accession>
<accession>Q3HKA9</accession>
<gene>
    <name type="primary">rpl36</name>
</gene>